<organism>
    <name type="scientific">Rattus norvegicus</name>
    <name type="common">Rat</name>
    <dbReference type="NCBI Taxonomy" id="10116"/>
    <lineage>
        <taxon>Eukaryota</taxon>
        <taxon>Metazoa</taxon>
        <taxon>Chordata</taxon>
        <taxon>Craniata</taxon>
        <taxon>Vertebrata</taxon>
        <taxon>Euteleostomi</taxon>
        <taxon>Mammalia</taxon>
        <taxon>Eutheria</taxon>
        <taxon>Euarchontoglires</taxon>
        <taxon>Glires</taxon>
        <taxon>Rodentia</taxon>
        <taxon>Myomorpha</taxon>
        <taxon>Muroidea</taxon>
        <taxon>Muridae</taxon>
        <taxon>Murinae</taxon>
        <taxon>Rattus</taxon>
    </lineage>
</organism>
<evidence type="ECO:0000250" key="1"/>
<evidence type="ECO:0000255" key="2"/>
<evidence type="ECO:0000305" key="3"/>
<evidence type="ECO:0000312" key="4">
    <source>
        <dbReference type="RGD" id="1308600"/>
    </source>
</evidence>
<dbReference type="EMBL" id="AABR03025235">
    <property type="status" value="NOT_ANNOTATED_CDS"/>
    <property type="molecule type" value="Genomic_DNA"/>
</dbReference>
<dbReference type="RefSeq" id="NP_001014200.2">
    <property type="nucleotide sequence ID" value="NM_001014178.2"/>
</dbReference>
<dbReference type="SMR" id="Q5FVL3"/>
<dbReference type="FunCoup" id="Q5FVL3">
    <property type="interactions" value="872"/>
</dbReference>
<dbReference type="STRING" id="10116.ENSRNOP00000006186"/>
<dbReference type="PhosphoSitePlus" id="Q5FVL3"/>
<dbReference type="SwissPalm" id="Q5FVL3"/>
<dbReference type="PaxDb" id="10116-ENSRNOP00000006186"/>
<dbReference type="Ensembl" id="ENSRNOT00000006186.7">
    <property type="protein sequence ID" value="ENSRNOP00000006186.4"/>
    <property type="gene ID" value="ENSRNOG00000004532.7"/>
</dbReference>
<dbReference type="GeneID" id="362090"/>
<dbReference type="KEGG" id="rno:362090"/>
<dbReference type="UCSC" id="RGD:1308600">
    <property type="organism name" value="rat"/>
</dbReference>
<dbReference type="AGR" id="RGD:1308600"/>
<dbReference type="CTD" id="138311"/>
<dbReference type="RGD" id="1308600">
    <property type="gene designation" value="Dipk1b"/>
</dbReference>
<dbReference type="eggNOG" id="ENOG502QU5P">
    <property type="taxonomic scope" value="Eukaryota"/>
</dbReference>
<dbReference type="GeneTree" id="ENSGT00390000006452"/>
<dbReference type="HOGENOM" id="CLU_039177_0_0_1"/>
<dbReference type="InParanoid" id="Q5FVL3"/>
<dbReference type="OrthoDB" id="8860232at2759"/>
<dbReference type="PhylomeDB" id="Q5FVL3"/>
<dbReference type="TreeFam" id="TF313319"/>
<dbReference type="PRO" id="PR:Q5FVL3"/>
<dbReference type="Proteomes" id="UP000002494">
    <property type="component" value="Chromosome 3"/>
</dbReference>
<dbReference type="Bgee" id="ENSRNOG00000004532">
    <property type="expression patterns" value="Expressed in frontal cortex and 20 other cell types or tissues"/>
</dbReference>
<dbReference type="GO" id="GO:0005789">
    <property type="term" value="C:endoplasmic reticulum membrane"/>
    <property type="evidence" value="ECO:0007669"/>
    <property type="project" value="UniProtKB-SubCell"/>
</dbReference>
<dbReference type="InterPro" id="IPR022049">
    <property type="entry name" value="FAM69_kinase_dom"/>
</dbReference>
<dbReference type="InterPro" id="IPR029244">
    <property type="entry name" value="FAM69_N"/>
</dbReference>
<dbReference type="PANTHER" id="PTHR21093:SF3">
    <property type="entry name" value="DIVERGENT PROTEIN KINASE DOMAIN 1B"/>
    <property type="match status" value="1"/>
</dbReference>
<dbReference type="PANTHER" id="PTHR21093">
    <property type="entry name" value="DIVERGENT PROTEIN KINASE DOMAIN 1C-RELATED"/>
    <property type="match status" value="1"/>
</dbReference>
<dbReference type="Pfam" id="PF12260">
    <property type="entry name" value="PIP49_C"/>
    <property type="match status" value="1"/>
</dbReference>
<dbReference type="Pfam" id="PF14875">
    <property type="entry name" value="PIP49_N"/>
    <property type="match status" value="1"/>
</dbReference>
<dbReference type="SMART" id="SM01299">
    <property type="entry name" value="PIP49_N"/>
    <property type="match status" value="1"/>
</dbReference>
<comment type="subcellular location">
    <subcellularLocation>
        <location evidence="1">Endoplasmic reticulum membrane</location>
        <topology evidence="1">Single-pass type II membrane protein</topology>
    </subcellularLocation>
</comment>
<comment type="PTM">
    <text evidence="1">Among the many cysteines in the lumenal domain, most are probably involved in disulfide bonds.</text>
</comment>
<comment type="similarity">
    <text evidence="3">Belongs to the DIPK family.</text>
</comment>
<sequence>MRRLRRLVHLVLLCPFSKGLQGRLPGLRVKYVLLVWLGIFVGSWMVYVHYSSYSELCRGHVCQVVICDQYQKGIISGSVCQDLCELQKVEWRTCLSSAPGQQVYSGLWQDKEVTIKCGIEEALNSKAWPDAVPRRELVLFDKPTRGTSIKEFREMTLSFLKANLGDLPSLPALVDQILLMADFNKDSRVSLAEAKSVWALLQRNEFLLLLSLQEKEHASRLLGYCGDLYLTESIPHGSWHGAVLLPALRPLLPSVLHRALQQWFGPAWPWRAKIAIGLLEFVEELFHGSYGTFYMCETTLANVGYTATYDFKMADLQQVAPEATVRRFLQGRHCEQSSDCIYGRDCRAPCDKLMRQCKGDLIQPNLAKVCELLRDYLLPGAPADLYEELGKQLRTCTTLSGLASQVEAHHSLVLSHLKTLLWREISNTNYS</sequence>
<proteinExistence type="inferred from homology"/>
<feature type="chain" id="PRO_0000287233" description="Divergent protein kinase domain 1B">
    <location>
        <begin position="1"/>
        <end position="431"/>
    </location>
</feature>
<feature type="topological domain" description="Cytoplasmic" evidence="2">
    <location>
        <begin position="1"/>
        <end position="30"/>
    </location>
</feature>
<feature type="transmembrane region" description="Helical" evidence="2">
    <location>
        <begin position="31"/>
        <end position="51"/>
    </location>
</feature>
<feature type="topological domain" description="Lumenal" evidence="2">
    <location>
        <begin position="52"/>
        <end position="431"/>
    </location>
</feature>
<feature type="short sequence motif" description="May mediate ER retention" evidence="1">
    <location>
        <begin position="5"/>
        <end position="6"/>
    </location>
</feature>
<feature type="disulfide bond" evidence="3">
    <location>
        <begin position="57"/>
        <end position="94"/>
    </location>
</feature>
<feature type="disulfide bond" evidence="3">
    <location>
        <begin position="62"/>
        <end position="117"/>
    </location>
</feature>
<name>DIK1B_RAT</name>
<reference key="1">
    <citation type="journal article" date="2004" name="Nature">
        <title>Genome sequence of the Brown Norway rat yields insights into mammalian evolution.</title>
        <authorList>
            <person name="Gibbs R.A."/>
            <person name="Weinstock G.M."/>
            <person name="Metzker M.L."/>
            <person name="Muzny D.M."/>
            <person name="Sodergren E.J."/>
            <person name="Scherer S."/>
            <person name="Scott G."/>
            <person name="Steffen D."/>
            <person name="Worley K.C."/>
            <person name="Burch P.E."/>
            <person name="Okwuonu G."/>
            <person name="Hines S."/>
            <person name="Lewis L."/>
            <person name="Deramo C."/>
            <person name="Delgado O."/>
            <person name="Dugan-Rocha S."/>
            <person name="Miner G."/>
            <person name="Morgan M."/>
            <person name="Hawes A."/>
            <person name="Gill R."/>
            <person name="Holt R.A."/>
            <person name="Adams M.D."/>
            <person name="Amanatides P.G."/>
            <person name="Baden-Tillson H."/>
            <person name="Barnstead M."/>
            <person name="Chin S."/>
            <person name="Evans C.A."/>
            <person name="Ferriera S."/>
            <person name="Fosler C."/>
            <person name="Glodek A."/>
            <person name="Gu Z."/>
            <person name="Jennings D."/>
            <person name="Kraft C.L."/>
            <person name="Nguyen T."/>
            <person name="Pfannkoch C.M."/>
            <person name="Sitter C."/>
            <person name="Sutton G.G."/>
            <person name="Venter J.C."/>
            <person name="Woodage T."/>
            <person name="Smith D."/>
            <person name="Lee H.-M."/>
            <person name="Gustafson E."/>
            <person name="Cahill P."/>
            <person name="Kana A."/>
            <person name="Doucette-Stamm L."/>
            <person name="Weinstock K."/>
            <person name="Fechtel K."/>
            <person name="Weiss R.B."/>
            <person name="Dunn D.M."/>
            <person name="Green E.D."/>
            <person name="Blakesley R.W."/>
            <person name="Bouffard G.G."/>
            <person name="De Jong P.J."/>
            <person name="Osoegawa K."/>
            <person name="Zhu B."/>
            <person name="Marra M."/>
            <person name="Schein J."/>
            <person name="Bosdet I."/>
            <person name="Fjell C."/>
            <person name="Jones S."/>
            <person name="Krzywinski M."/>
            <person name="Mathewson C."/>
            <person name="Siddiqui A."/>
            <person name="Wye N."/>
            <person name="McPherson J."/>
            <person name="Zhao S."/>
            <person name="Fraser C.M."/>
            <person name="Shetty J."/>
            <person name="Shatsman S."/>
            <person name="Geer K."/>
            <person name="Chen Y."/>
            <person name="Abramzon S."/>
            <person name="Nierman W.C."/>
            <person name="Havlak P.H."/>
            <person name="Chen R."/>
            <person name="Durbin K.J."/>
            <person name="Egan A."/>
            <person name="Ren Y."/>
            <person name="Song X.-Z."/>
            <person name="Li B."/>
            <person name="Liu Y."/>
            <person name="Qin X."/>
            <person name="Cawley S."/>
            <person name="Cooney A.J."/>
            <person name="D'Souza L.M."/>
            <person name="Martin K."/>
            <person name="Wu J.Q."/>
            <person name="Gonzalez-Garay M.L."/>
            <person name="Jackson A.R."/>
            <person name="Kalafus K.J."/>
            <person name="McLeod M.P."/>
            <person name="Milosavljevic A."/>
            <person name="Virk D."/>
            <person name="Volkov A."/>
            <person name="Wheeler D.A."/>
            <person name="Zhang Z."/>
            <person name="Bailey J.A."/>
            <person name="Eichler E.E."/>
            <person name="Tuzun E."/>
            <person name="Birney E."/>
            <person name="Mongin E."/>
            <person name="Ureta-Vidal A."/>
            <person name="Woodwark C."/>
            <person name="Zdobnov E."/>
            <person name="Bork P."/>
            <person name="Suyama M."/>
            <person name="Torrents D."/>
            <person name="Alexandersson M."/>
            <person name="Trask B.J."/>
            <person name="Young J.M."/>
            <person name="Huang H."/>
            <person name="Wang H."/>
            <person name="Xing H."/>
            <person name="Daniels S."/>
            <person name="Gietzen D."/>
            <person name="Schmidt J."/>
            <person name="Stevens K."/>
            <person name="Vitt U."/>
            <person name="Wingrove J."/>
            <person name="Camara F."/>
            <person name="Mar Alba M."/>
            <person name="Abril J.F."/>
            <person name="Guigo R."/>
            <person name="Smit A."/>
            <person name="Dubchak I."/>
            <person name="Rubin E.M."/>
            <person name="Couronne O."/>
            <person name="Poliakov A."/>
            <person name="Huebner N."/>
            <person name="Ganten D."/>
            <person name="Goesele C."/>
            <person name="Hummel O."/>
            <person name="Kreitler T."/>
            <person name="Lee Y.-A."/>
            <person name="Monti J."/>
            <person name="Schulz H."/>
            <person name="Zimdahl H."/>
            <person name="Himmelbauer H."/>
            <person name="Lehrach H."/>
            <person name="Jacob H.J."/>
            <person name="Bromberg S."/>
            <person name="Gullings-Handley J."/>
            <person name="Jensen-Seaman M.I."/>
            <person name="Kwitek A.E."/>
            <person name="Lazar J."/>
            <person name="Pasko D."/>
            <person name="Tonellato P.J."/>
            <person name="Twigger S."/>
            <person name="Ponting C.P."/>
            <person name="Duarte J.M."/>
            <person name="Rice S."/>
            <person name="Goodstadt L."/>
            <person name="Beatson S.A."/>
            <person name="Emes R.D."/>
            <person name="Winter E.E."/>
            <person name="Webber C."/>
            <person name="Brandt P."/>
            <person name="Nyakatura G."/>
            <person name="Adetobi M."/>
            <person name="Chiaromonte F."/>
            <person name="Elnitski L."/>
            <person name="Eswara P."/>
            <person name="Hardison R.C."/>
            <person name="Hou M."/>
            <person name="Kolbe D."/>
            <person name="Makova K."/>
            <person name="Miller W."/>
            <person name="Nekrutenko A."/>
            <person name="Riemer C."/>
            <person name="Schwartz S."/>
            <person name="Taylor J."/>
            <person name="Yang S."/>
            <person name="Zhang Y."/>
            <person name="Lindpaintner K."/>
            <person name="Andrews T.D."/>
            <person name="Caccamo M."/>
            <person name="Clamp M."/>
            <person name="Clarke L."/>
            <person name="Curwen V."/>
            <person name="Durbin R.M."/>
            <person name="Eyras E."/>
            <person name="Searle S.M."/>
            <person name="Cooper G.M."/>
            <person name="Batzoglou S."/>
            <person name="Brudno M."/>
            <person name="Sidow A."/>
            <person name="Stone E.A."/>
            <person name="Payseur B.A."/>
            <person name="Bourque G."/>
            <person name="Lopez-Otin C."/>
            <person name="Puente X.S."/>
            <person name="Chakrabarti K."/>
            <person name="Chatterji S."/>
            <person name="Dewey C."/>
            <person name="Pachter L."/>
            <person name="Bray N."/>
            <person name="Yap V.B."/>
            <person name="Caspi A."/>
            <person name="Tesler G."/>
            <person name="Pevzner P.A."/>
            <person name="Haussler D."/>
            <person name="Roskin K.M."/>
            <person name="Baertsch R."/>
            <person name="Clawson H."/>
            <person name="Furey T.S."/>
            <person name="Hinrichs A.S."/>
            <person name="Karolchik D."/>
            <person name="Kent W.J."/>
            <person name="Rosenbloom K.R."/>
            <person name="Trumbower H."/>
            <person name="Weirauch M."/>
            <person name="Cooper D.N."/>
            <person name="Stenson P.D."/>
            <person name="Ma B."/>
            <person name="Brent M."/>
            <person name="Arumugam M."/>
            <person name="Shteynberg D."/>
            <person name="Copley R.R."/>
            <person name="Taylor M.S."/>
            <person name="Riethman H."/>
            <person name="Mudunuri U."/>
            <person name="Peterson J."/>
            <person name="Guyer M."/>
            <person name="Felsenfeld A."/>
            <person name="Old S."/>
            <person name="Mockrin S."/>
            <person name="Collins F.S."/>
        </authorList>
    </citation>
    <scope>NUCLEOTIDE SEQUENCE [LARGE SCALE GENOMIC DNA]</scope>
    <source>
        <strain>Brown Norway</strain>
    </source>
</reference>
<keyword id="KW-1015">Disulfide bond</keyword>
<keyword id="KW-0256">Endoplasmic reticulum</keyword>
<keyword id="KW-0472">Membrane</keyword>
<keyword id="KW-1185">Reference proteome</keyword>
<keyword id="KW-0735">Signal-anchor</keyword>
<keyword id="KW-0812">Transmembrane</keyword>
<keyword id="KW-1133">Transmembrane helix</keyword>
<accession>Q5FVL3</accession>
<gene>
    <name evidence="4" type="primary">Dipk1b</name>
    <name type="synonym">Fam69b</name>
</gene>
<protein>
    <recommendedName>
        <fullName>Divergent protein kinase domain 1B</fullName>
    </recommendedName>
    <alternativeName>
        <fullName>Pancreatitis-induced protein 49</fullName>
        <shortName>PIP49</shortName>
    </alternativeName>
    <alternativeName>
        <fullName>Protein FAM69B</fullName>
    </alternativeName>
</protein>